<reference key="1">
    <citation type="journal article" date="1995" name="Plant Mol. Biol. Rep.">
        <title>Complete nucleotide sequence of the Porphyra purpurea chloroplast genome.</title>
        <authorList>
            <person name="Reith M.E."/>
            <person name="Munholland J."/>
        </authorList>
    </citation>
    <scope>NUCLEOTIDE SEQUENCE [LARGE SCALE GENOMIC DNA]</scope>
    <source>
        <strain>Avonport</strain>
    </source>
</reference>
<name>UPPH_PORPU</name>
<sequence length="198" mass="22267">MQLQINVASHPLIQHWSGILENNNNPGTILRTACSELGKWITYEIMREWLVTETVSIKDNTTISLISNHYKYIIVIIMPYGFILAEGARALLPTANIALVSYNNSIDNISDKLDSFTKILVLDLFLDEIIMTSVLEELIKKGAILNNIKIACLECGSSQLNKLGQKWSTLEIYTTKVNSITDNSEATKEQVLKDKFFA</sequence>
<comment type="subcellular location">
    <subcellularLocation>
        <location>Plastid</location>
        <location>Chloroplast</location>
    </subcellularLocation>
</comment>
<comment type="similarity">
    <text evidence="1">Belongs to the UPRTase family.</text>
</comment>
<protein>
    <recommendedName>
        <fullName>Uracil phosphoribosyltransferase homolog</fullName>
    </recommendedName>
</protein>
<proteinExistence type="inferred from homology"/>
<organism>
    <name type="scientific">Porphyra purpurea</name>
    <name type="common">Red seaweed</name>
    <name type="synonym">Ulva purpurea</name>
    <dbReference type="NCBI Taxonomy" id="2787"/>
    <lineage>
        <taxon>Eukaryota</taxon>
        <taxon>Rhodophyta</taxon>
        <taxon>Bangiophyceae</taxon>
        <taxon>Bangiales</taxon>
        <taxon>Bangiaceae</taxon>
        <taxon>Porphyra</taxon>
    </lineage>
</organism>
<evidence type="ECO:0000305" key="1"/>
<dbReference type="EMBL" id="U38804">
    <property type="protein sequence ID" value="AAC08240.1"/>
    <property type="molecule type" value="Genomic_DNA"/>
</dbReference>
<dbReference type="PIR" id="S73275">
    <property type="entry name" value="S73275"/>
</dbReference>
<dbReference type="RefSeq" id="NP_053964.1">
    <property type="nucleotide sequence ID" value="NC_000925.1"/>
</dbReference>
<dbReference type="SMR" id="P51354"/>
<dbReference type="GeneID" id="809990"/>
<dbReference type="GO" id="GO:0009507">
    <property type="term" value="C:chloroplast"/>
    <property type="evidence" value="ECO:0007669"/>
    <property type="project" value="UniProtKB-SubCell"/>
</dbReference>
<dbReference type="Gene3D" id="3.40.50.2020">
    <property type="match status" value="1"/>
</dbReference>
<dbReference type="InterPro" id="IPR000836">
    <property type="entry name" value="PRibTrfase_dom"/>
</dbReference>
<dbReference type="InterPro" id="IPR029057">
    <property type="entry name" value="PRTase-like"/>
</dbReference>
<dbReference type="Pfam" id="PF14681">
    <property type="entry name" value="UPRTase"/>
    <property type="match status" value="1"/>
</dbReference>
<dbReference type="SUPFAM" id="SSF53271">
    <property type="entry name" value="PRTase-like"/>
    <property type="match status" value="1"/>
</dbReference>
<keyword id="KW-0150">Chloroplast</keyword>
<keyword id="KW-0934">Plastid</keyword>
<accession>P51354</accession>
<geneLocation type="chloroplast"/>
<feature type="chain" id="PRO_0000217482" description="Uracil phosphoribosyltransferase homolog">
    <location>
        <begin position="1"/>
        <end position="198"/>
    </location>
</feature>